<proteinExistence type="inferred from homology"/>
<comment type="function">
    <text evidence="1">Catalyzes the hydrolysis of the adenine ring of phosphoribosyl-AMP.</text>
</comment>
<comment type="catalytic activity">
    <reaction evidence="1">
        <text>1-(5-phospho-beta-D-ribosyl)-5'-AMP + H2O = 1-(5-phospho-beta-D-ribosyl)-5-[(5-phospho-beta-D-ribosylamino)methylideneamino]imidazole-4-carboxamide</text>
        <dbReference type="Rhea" id="RHEA:20049"/>
        <dbReference type="ChEBI" id="CHEBI:15377"/>
        <dbReference type="ChEBI" id="CHEBI:58435"/>
        <dbReference type="ChEBI" id="CHEBI:59457"/>
        <dbReference type="EC" id="3.5.4.19"/>
    </reaction>
</comment>
<comment type="cofactor">
    <cofactor evidence="1">
        <name>Mg(2+)</name>
        <dbReference type="ChEBI" id="CHEBI:18420"/>
    </cofactor>
    <text evidence="1">Binds 1 Mg(2+) ion per subunit.</text>
</comment>
<comment type="cofactor">
    <cofactor evidence="1">
        <name>Zn(2+)</name>
        <dbReference type="ChEBI" id="CHEBI:29105"/>
    </cofactor>
    <text evidence="1">Binds 1 zinc ion per subunit.</text>
</comment>
<comment type="pathway">
    <text evidence="1">Amino-acid biosynthesis; L-histidine biosynthesis; L-histidine from 5-phospho-alpha-D-ribose 1-diphosphate: step 3/9.</text>
</comment>
<comment type="subunit">
    <text evidence="1">Homodimer.</text>
</comment>
<comment type="subcellular location">
    <subcellularLocation>
        <location evidence="1">Cytoplasm</location>
    </subcellularLocation>
</comment>
<comment type="similarity">
    <text evidence="1">Belongs to the PRA-CH family.</text>
</comment>
<keyword id="KW-0028">Amino-acid biosynthesis</keyword>
<keyword id="KW-0963">Cytoplasm</keyword>
<keyword id="KW-0368">Histidine biosynthesis</keyword>
<keyword id="KW-0378">Hydrolase</keyword>
<keyword id="KW-0460">Magnesium</keyword>
<keyword id="KW-0479">Metal-binding</keyword>
<keyword id="KW-0862">Zinc</keyword>
<evidence type="ECO:0000255" key="1">
    <source>
        <dbReference type="HAMAP-Rule" id="MF_01021"/>
    </source>
</evidence>
<name>HIS3_BURCJ</name>
<sequence>MNTETKSLPAWLDKVRWDDNGLVPVIAQEASTNDVLMFAWMNREALAKTVETRRAVYYSRSRKRLWFKGEESGHVQHLHEVRLDCDEDVVLLKVEQVSGIACHTGRHSCFFQKFEGNVDSGDWVAVEPVLKDPEHIYK</sequence>
<reference key="1">
    <citation type="journal article" date="2009" name="J. Bacteriol.">
        <title>The genome of Burkholderia cenocepacia J2315, an epidemic pathogen of cystic fibrosis patients.</title>
        <authorList>
            <person name="Holden M.T."/>
            <person name="Seth-Smith H.M."/>
            <person name="Crossman L.C."/>
            <person name="Sebaihia M."/>
            <person name="Bentley S.D."/>
            <person name="Cerdeno-Tarraga A.M."/>
            <person name="Thomson N.R."/>
            <person name="Bason N."/>
            <person name="Quail M.A."/>
            <person name="Sharp S."/>
            <person name="Cherevach I."/>
            <person name="Churcher C."/>
            <person name="Goodhead I."/>
            <person name="Hauser H."/>
            <person name="Holroyd N."/>
            <person name="Mungall K."/>
            <person name="Scott P."/>
            <person name="Walker D."/>
            <person name="White B."/>
            <person name="Rose H."/>
            <person name="Iversen P."/>
            <person name="Mil-Homens D."/>
            <person name="Rocha E.P."/>
            <person name="Fialho A.M."/>
            <person name="Baldwin A."/>
            <person name="Dowson C."/>
            <person name="Barrell B.G."/>
            <person name="Govan J.R."/>
            <person name="Vandamme P."/>
            <person name="Hart C.A."/>
            <person name="Mahenthiralingam E."/>
            <person name="Parkhill J."/>
        </authorList>
    </citation>
    <scope>NUCLEOTIDE SEQUENCE [LARGE SCALE GENOMIC DNA]</scope>
    <source>
        <strain>ATCC BAA-245 / DSM 16553 / LMG 16656 / NCTC 13227 / J2315 / CF5610</strain>
    </source>
</reference>
<organism>
    <name type="scientific">Burkholderia cenocepacia (strain ATCC BAA-245 / DSM 16553 / LMG 16656 / NCTC 13227 / J2315 / CF5610)</name>
    <name type="common">Burkholderia cepacia (strain J2315)</name>
    <dbReference type="NCBI Taxonomy" id="216591"/>
    <lineage>
        <taxon>Bacteria</taxon>
        <taxon>Pseudomonadati</taxon>
        <taxon>Pseudomonadota</taxon>
        <taxon>Betaproteobacteria</taxon>
        <taxon>Burkholderiales</taxon>
        <taxon>Burkholderiaceae</taxon>
        <taxon>Burkholderia</taxon>
        <taxon>Burkholderia cepacia complex</taxon>
    </lineage>
</organism>
<feature type="chain" id="PRO_1000135339" description="Phosphoribosyl-AMP cyclohydrolase">
    <location>
        <begin position="1"/>
        <end position="138"/>
    </location>
</feature>
<feature type="binding site" evidence="1">
    <location>
        <position position="84"/>
    </location>
    <ligand>
        <name>Mg(2+)</name>
        <dbReference type="ChEBI" id="CHEBI:18420"/>
    </ligand>
</feature>
<feature type="binding site" evidence="1">
    <location>
        <position position="85"/>
    </location>
    <ligand>
        <name>Zn(2+)</name>
        <dbReference type="ChEBI" id="CHEBI:29105"/>
        <note>ligand shared between dimeric partners</note>
    </ligand>
</feature>
<feature type="binding site" evidence="1">
    <location>
        <position position="86"/>
    </location>
    <ligand>
        <name>Mg(2+)</name>
        <dbReference type="ChEBI" id="CHEBI:18420"/>
    </ligand>
</feature>
<feature type="binding site" evidence="1">
    <location>
        <position position="88"/>
    </location>
    <ligand>
        <name>Mg(2+)</name>
        <dbReference type="ChEBI" id="CHEBI:18420"/>
    </ligand>
</feature>
<feature type="binding site" evidence="1">
    <location>
        <position position="102"/>
    </location>
    <ligand>
        <name>Zn(2+)</name>
        <dbReference type="ChEBI" id="CHEBI:29105"/>
        <note>ligand shared between dimeric partners</note>
    </ligand>
</feature>
<feature type="binding site" evidence="1">
    <location>
        <position position="109"/>
    </location>
    <ligand>
        <name>Zn(2+)</name>
        <dbReference type="ChEBI" id="CHEBI:29105"/>
        <note>ligand shared between dimeric partners</note>
    </ligand>
</feature>
<dbReference type="EC" id="3.5.4.19" evidence="1"/>
<dbReference type="EMBL" id="AM747720">
    <property type="protein sequence ID" value="CAR50629.1"/>
    <property type="molecule type" value="Genomic_DNA"/>
</dbReference>
<dbReference type="RefSeq" id="WP_012492307.1">
    <property type="nucleotide sequence ID" value="NC_011000.1"/>
</dbReference>
<dbReference type="SMR" id="B4E642"/>
<dbReference type="KEGG" id="bcj:BCAL0319"/>
<dbReference type="eggNOG" id="COG0139">
    <property type="taxonomic scope" value="Bacteria"/>
</dbReference>
<dbReference type="HOGENOM" id="CLU_048577_5_0_4"/>
<dbReference type="BioCyc" id="BCEN216591:G1G1V-364-MONOMER"/>
<dbReference type="UniPathway" id="UPA00031">
    <property type="reaction ID" value="UER00008"/>
</dbReference>
<dbReference type="Proteomes" id="UP000001035">
    <property type="component" value="Chromosome 1"/>
</dbReference>
<dbReference type="GO" id="GO:0005737">
    <property type="term" value="C:cytoplasm"/>
    <property type="evidence" value="ECO:0007669"/>
    <property type="project" value="UniProtKB-SubCell"/>
</dbReference>
<dbReference type="GO" id="GO:0000287">
    <property type="term" value="F:magnesium ion binding"/>
    <property type="evidence" value="ECO:0007669"/>
    <property type="project" value="UniProtKB-UniRule"/>
</dbReference>
<dbReference type="GO" id="GO:0004635">
    <property type="term" value="F:phosphoribosyl-AMP cyclohydrolase activity"/>
    <property type="evidence" value="ECO:0007669"/>
    <property type="project" value="UniProtKB-UniRule"/>
</dbReference>
<dbReference type="GO" id="GO:0008270">
    <property type="term" value="F:zinc ion binding"/>
    <property type="evidence" value="ECO:0007669"/>
    <property type="project" value="UniProtKB-UniRule"/>
</dbReference>
<dbReference type="GO" id="GO:0000105">
    <property type="term" value="P:L-histidine biosynthetic process"/>
    <property type="evidence" value="ECO:0007669"/>
    <property type="project" value="UniProtKB-UniRule"/>
</dbReference>
<dbReference type="FunFam" id="3.10.20.810:FF:000001">
    <property type="entry name" value="Histidine biosynthesis bifunctional protein HisIE"/>
    <property type="match status" value="1"/>
</dbReference>
<dbReference type="Gene3D" id="3.10.20.810">
    <property type="entry name" value="Phosphoribosyl-AMP cyclohydrolase"/>
    <property type="match status" value="1"/>
</dbReference>
<dbReference type="HAMAP" id="MF_01021">
    <property type="entry name" value="HisI"/>
    <property type="match status" value="1"/>
</dbReference>
<dbReference type="InterPro" id="IPR026660">
    <property type="entry name" value="PRA-CH"/>
</dbReference>
<dbReference type="InterPro" id="IPR002496">
    <property type="entry name" value="PRib_AMP_CycHydrolase_dom"/>
</dbReference>
<dbReference type="InterPro" id="IPR038019">
    <property type="entry name" value="PRib_AMP_CycHydrolase_sf"/>
</dbReference>
<dbReference type="NCBIfam" id="NF000768">
    <property type="entry name" value="PRK00051.1"/>
    <property type="match status" value="1"/>
</dbReference>
<dbReference type="PANTHER" id="PTHR42945">
    <property type="entry name" value="HISTIDINE BIOSYNTHESIS BIFUNCTIONAL PROTEIN"/>
    <property type="match status" value="1"/>
</dbReference>
<dbReference type="PANTHER" id="PTHR42945:SF1">
    <property type="entry name" value="HISTIDINE BIOSYNTHESIS BIFUNCTIONAL PROTEIN HIS7"/>
    <property type="match status" value="1"/>
</dbReference>
<dbReference type="Pfam" id="PF01502">
    <property type="entry name" value="PRA-CH"/>
    <property type="match status" value="1"/>
</dbReference>
<dbReference type="SUPFAM" id="SSF141734">
    <property type="entry name" value="HisI-like"/>
    <property type="match status" value="1"/>
</dbReference>
<accession>B4E642</accession>
<gene>
    <name evidence="1" type="primary">hisI</name>
    <name type="ordered locus">BceJ2315_03210</name>
    <name type="ORF">BCAL0319</name>
</gene>
<protein>
    <recommendedName>
        <fullName evidence="1">Phosphoribosyl-AMP cyclohydrolase</fullName>
        <shortName evidence="1">PRA-CH</shortName>
        <ecNumber evidence="1">3.5.4.19</ecNumber>
    </recommendedName>
</protein>